<dbReference type="EMBL" id="BA000001">
    <property type="protein sequence ID" value="BAA31108.1"/>
    <property type="molecule type" value="Genomic_DNA"/>
</dbReference>
<dbReference type="PIR" id="E71214">
    <property type="entry name" value="E71214"/>
</dbReference>
<dbReference type="RefSeq" id="WP_010886044.1">
    <property type="nucleotide sequence ID" value="NC_000961.1"/>
</dbReference>
<dbReference type="SMR" id="O57721"/>
<dbReference type="STRING" id="70601.gene:9378994"/>
<dbReference type="EnsemblBacteria" id="BAA31108">
    <property type="protein sequence ID" value="BAA31108"/>
    <property type="gene ID" value="BAA31108"/>
</dbReference>
<dbReference type="GeneID" id="1442826"/>
<dbReference type="KEGG" id="pho:PH1981"/>
<dbReference type="eggNOG" id="arCOG04138">
    <property type="taxonomic scope" value="Archaea"/>
</dbReference>
<dbReference type="OrthoDB" id="85892at2157"/>
<dbReference type="Proteomes" id="UP000000752">
    <property type="component" value="Chromosome"/>
</dbReference>
<dbReference type="GO" id="GO:0005886">
    <property type="term" value="C:plasma membrane"/>
    <property type="evidence" value="ECO:0007669"/>
    <property type="project" value="UniProtKB-SubCell"/>
</dbReference>
<dbReference type="GO" id="GO:0033179">
    <property type="term" value="C:proton-transporting V-type ATPase, V0 domain"/>
    <property type="evidence" value="ECO:0007669"/>
    <property type="project" value="InterPro"/>
</dbReference>
<dbReference type="GO" id="GO:0016471">
    <property type="term" value="C:vacuolar proton-transporting V-type ATPase complex"/>
    <property type="evidence" value="ECO:0007669"/>
    <property type="project" value="TreeGrafter"/>
</dbReference>
<dbReference type="GO" id="GO:0051117">
    <property type="term" value="F:ATPase binding"/>
    <property type="evidence" value="ECO:0007669"/>
    <property type="project" value="TreeGrafter"/>
</dbReference>
<dbReference type="GO" id="GO:0046961">
    <property type="term" value="F:proton-transporting ATPase activity, rotational mechanism"/>
    <property type="evidence" value="ECO:0007669"/>
    <property type="project" value="InterPro"/>
</dbReference>
<dbReference type="GO" id="GO:0007035">
    <property type="term" value="P:vacuolar acidification"/>
    <property type="evidence" value="ECO:0007669"/>
    <property type="project" value="TreeGrafter"/>
</dbReference>
<dbReference type="Gene3D" id="1.20.1460.20">
    <property type="match status" value="1"/>
</dbReference>
<dbReference type="Gene3D" id="3.30.70.2170">
    <property type="match status" value="1"/>
</dbReference>
<dbReference type="Gene3D" id="3.30.70.2750">
    <property type="match status" value="1"/>
</dbReference>
<dbReference type="InterPro" id="IPR002490">
    <property type="entry name" value="V-ATPase_116kDa_su"/>
</dbReference>
<dbReference type="NCBIfam" id="NF004428">
    <property type="entry name" value="PRK05771.2-1"/>
    <property type="match status" value="1"/>
</dbReference>
<dbReference type="PANTHER" id="PTHR11629:SF63">
    <property type="entry name" value="V-TYPE PROTON ATPASE SUBUNIT A"/>
    <property type="match status" value="1"/>
</dbReference>
<dbReference type="PANTHER" id="PTHR11629">
    <property type="entry name" value="VACUOLAR PROTON ATPASES"/>
    <property type="match status" value="1"/>
</dbReference>
<dbReference type="Pfam" id="PF01496">
    <property type="entry name" value="V_ATPase_I"/>
    <property type="match status" value="2"/>
</dbReference>
<protein>
    <recommendedName>
        <fullName evidence="3">A-type ATP synthase subunit I</fullName>
    </recommendedName>
</protein>
<feature type="chain" id="PRO_0000119233" description="A-type ATP synthase subunit I">
    <location>
        <begin position="1"/>
        <end position="659"/>
    </location>
</feature>
<feature type="transmembrane region" description="Helical" evidence="2">
    <location>
        <begin position="376"/>
        <end position="396"/>
    </location>
</feature>
<feature type="transmembrane region" description="Helical" evidence="2">
    <location>
        <begin position="415"/>
        <end position="435"/>
    </location>
</feature>
<feature type="transmembrane region" description="Helical" evidence="2">
    <location>
        <begin position="460"/>
        <end position="480"/>
    </location>
</feature>
<feature type="transmembrane region" description="Helical" evidence="2">
    <location>
        <begin position="489"/>
        <end position="509"/>
    </location>
</feature>
<feature type="transmembrane region" description="Helical" evidence="2">
    <location>
        <begin position="518"/>
        <end position="538"/>
    </location>
</feature>
<feature type="transmembrane region" description="Helical" evidence="2">
    <location>
        <begin position="542"/>
        <end position="562"/>
    </location>
</feature>
<feature type="transmembrane region" description="Helical" evidence="2">
    <location>
        <begin position="568"/>
        <end position="588"/>
    </location>
</feature>
<feature type="transmembrane region" description="Helical" evidence="2">
    <location>
        <begin position="590"/>
        <end position="610"/>
    </location>
</feature>
<evidence type="ECO:0000250" key="1">
    <source>
        <dbReference type="UniProtKB" id="Q57675"/>
    </source>
</evidence>
<evidence type="ECO:0000255" key="2"/>
<evidence type="ECO:0000305" key="3"/>
<keyword id="KW-1003">Cell membrane</keyword>
<keyword id="KW-0375">Hydrogen ion transport</keyword>
<keyword id="KW-0406">Ion transport</keyword>
<keyword id="KW-0472">Membrane</keyword>
<keyword id="KW-0812">Transmembrane</keyword>
<keyword id="KW-1133">Transmembrane helix</keyword>
<keyword id="KW-0813">Transport</keyword>
<comment type="function">
    <text evidence="1">Component of the A-type ATP synthase that produces ATP from ADP in the presence of a proton gradient across the membrane.</text>
</comment>
<comment type="subunit">
    <text evidence="1">Has multiple subunits with at least A(3), B(3), C, D, E, F, H, I and proteolipid K(x).</text>
</comment>
<comment type="subcellular location">
    <subcellularLocation>
        <location evidence="3">Cell membrane</location>
        <topology evidence="3">Multi-pass membrane protein</topology>
    </subcellularLocation>
</comment>
<comment type="similarity">
    <text evidence="3">Belongs to the V-ATPase 116 kDa subunit family.</text>
</comment>
<accession>O57721</accession>
<reference key="1">
    <citation type="journal article" date="1998" name="DNA Res.">
        <title>Complete sequence and gene organization of the genome of a hyper-thermophilic archaebacterium, Pyrococcus horikoshii OT3.</title>
        <authorList>
            <person name="Kawarabayasi Y."/>
            <person name="Sawada M."/>
            <person name="Horikawa H."/>
            <person name="Haikawa Y."/>
            <person name="Hino Y."/>
            <person name="Yamamoto S."/>
            <person name="Sekine M."/>
            <person name="Baba S."/>
            <person name="Kosugi H."/>
            <person name="Hosoyama A."/>
            <person name="Nagai Y."/>
            <person name="Sakai M."/>
            <person name="Ogura K."/>
            <person name="Otsuka R."/>
            <person name="Nakazawa H."/>
            <person name="Takamiya M."/>
            <person name="Ohfuku Y."/>
            <person name="Funahashi T."/>
            <person name="Tanaka T."/>
            <person name="Kudoh Y."/>
            <person name="Yamazaki J."/>
            <person name="Kushida N."/>
            <person name="Oguchi A."/>
            <person name="Aoki K."/>
            <person name="Yoshizawa T."/>
            <person name="Nakamura Y."/>
            <person name="Robb F.T."/>
            <person name="Horikoshi K."/>
            <person name="Masuchi Y."/>
            <person name="Shizuya H."/>
            <person name="Kikuchi H."/>
        </authorList>
    </citation>
    <scope>NUCLEOTIDE SEQUENCE [LARGE SCALE GENOMIC DNA]</scope>
    <source>
        <strain>ATCC 700860 / DSM 12428 / JCM 9974 / NBRC 100139 / OT-3</strain>
    </source>
</reference>
<organism>
    <name type="scientific">Pyrococcus horikoshii (strain ATCC 700860 / DSM 12428 / JCM 9974 / NBRC 100139 / OT-3)</name>
    <dbReference type="NCBI Taxonomy" id="70601"/>
    <lineage>
        <taxon>Archaea</taxon>
        <taxon>Methanobacteriati</taxon>
        <taxon>Methanobacteriota</taxon>
        <taxon>Thermococci</taxon>
        <taxon>Thermococcales</taxon>
        <taxon>Thermococcaceae</taxon>
        <taxon>Pyrococcus</taxon>
    </lineage>
</organism>
<proteinExistence type="inferred from homology"/>
<sequence>MFKPEKIVKIEVITLTRFRDTLLTYLHEIGVAQLEEVPIKEVQRDTPNEFYRKATSYSITLSRLVDTLKQYLPPKKGGFKEFMFPQEKPKKKYKYKGIEALIKDVETFLERVEPEIRSLESEVSRINNEISSLEDTLESLQILSNLNVEVEYLRGGSFLNVDVGLVDREKAEPLIKEISDVVEGRVHIVRKDIGARTLLVVVSLREDSSKVSSVLAKYGFEKIEVPEGKGLPRDLIPIYTEKIKEKEKELEEVKSRGRKVAERYYDELVFYKELMDNEREKGNYLSYLVRTEMTFGLLAWVPEKDVEKVVEGIKKITGGVAYINISEPSKEEIDNVPVKLKNPEFLSHFEMLTEMYGVPKYNEIDPTPIMAFTYSFFFGFMLTDFVYGLLLGIISALLVKGHSKLKDGTWKFAKIMLWSSVFTMTLGILFGSYCGNALDMAGIKVPRILDPMEQALTVLMIALAIGLAHLFTGYLLGFIVRWKNGDKKGAIFEQLSWLLIIIGITLFALSSRLGVPDLIVKGIFGIGLILFMIGEVLANKGMAVLLVISDFFGFVGNWLSYARLMALALATSGIALVINILVEMIWGIKIASVPLGALIGILVLIGGHIFSTAINALGAFVHALRLHYVEFFGTFYSGEGRKFEPFAAKREVSELEIET</sequence>
<name>AATI_PYRHO</name>
<gene>
    <name evidence="3" type="primary">atpI</name>
    <name type="ordered locus">PH1981</name>
</gene>